<keyword id="KW-0903">Direct protein sequencing</keyword>
<keyword id="KW-0235">DNA replication</keyword>
<keyword id="KW-0238">DNA-binding</keyword>
<keyword id="KW-0479">Metal-binding</keyword>
<keyword id="KW-0539">Nucleus</keyword>
<keyword id="KW-0862">Zinc</keyword>
<keyword id="KW-0863">Zinc-finger</keyword>
<comment type="function">
    <text evidence="1">As part of the heterotrimeric replication protein A complex (RPA/RP-A), binds and stabilizes single-stranded DNA intermediates, that form during DNA replication or upon DNA stress. It prevents their reannealing and in parallel, recruits and activates different proteins and complexes involved in DNA metabolism. Thereby, it plays an essential role both in DNA replication and the cellular response to DNA damage.</text>
</comment>
<comment type="subunit">
    <text>Component of the heterotrimeric canonical replication protein A complex (RPA).</text>
</comment>
<comment type="subcellular location">
    <subcellularLocation>
        <location>Nucleus</location>
    </subcellularLocation>
</comment>
<comment type="PTM">
    <text>The N-terminus is blocked.</text>
</comment>
<comment type="similarity">
    <text evidence="3">Belongs to the replication factor A protein 1 family.</text>
</comment>
<reference key="1">
    <citation type="journal article" date="1994" name="Mol. Biochem. Parasitol.">
        <title>Isolation of the genes encoding the 51-kilodalton and 28-kilodalton subunits of Crithidia fasciculata replication protein A.</title>
        <authorList>
            <person name="Brown G.W."/>
            <person name="Hines J.C."/>
            <person name="Fisher P."/>
            <person name="Ray D.S."/>
        </authorList>
    </citation>
    <scope>NUCLEOTIDE SEQUENCE [GENOMIC DNA]</scope>
    <scope>PARTIAL PROTEIN SEQUENCE</scope>
    <source>
        <strain>CfC1.1</strain>
    </source>
</reference>
<feature type="chain" id="PRO_0000097258" description="Replication factor A 51 kDa subunit">
    <location>
        <begin position="1"/>
        <end position="467"/>
    </location>
</feature>
<feature type="DNA-binding region" description="OB">
    <location>
        <begin position="23"/>
        <end position="105"/>
    </location>
</feature>
<feature type="zinc finger region" description="C4-type" evidence="2">
    <location>
        <begin position="313"/>
        <end position="335"/>
    </location>
</feature>
<dbReference type="EMBL" id="Z23163">
    <property type="protein sequence ID" value="CAA80682.1"/>
    <property type="molecule type" value="Genomic_DNA"/>
</dbReference>
<dbReference type="PIR" id="S38458">
    <property type="entry name" value="S38458"/>
</dbReference>
<dbReference type="SMR" id="Q23696"/>
<dbReference type="VEuPathDB" id="TriTrypDB:CFAC1_300030200"/>
<dbReference type="GO" id="GO:0005662">
    <property type="term" value="C:DNA replication factor A complex"/>
    <property type="evidence" value="ECO:0000250"/>
    <property type="project" value="UniProtKB"/>
</dbReference>
<dbReference type="GO" id="GO:0005634">
    <property type="term" value="C:nucleus"/>
    <property type="evidence" value="ECO:0000250"/>
    <property type="project" value="UniProtKB"/>
</dbReference>
<dbReference type="GO" id="GO:0003697">
    <property type="term" value="F:single-stranded DNA binding"/>
    <property type="evidence" value="ECO:0000250"/>
    <property type="project" value="UniProtKB"/>
</dbReference>
<dbReference type="GO" id="GO:0008270">
    <property type="term" value="F:zinc ion binding"/>
    <property type="evidence" value="ECO:0007669"/>
    <property type="project" value="UniProtKB-KW"/>
</dbReference>
<dbReference type="GO" id="GO:0006310">
    <property type="term" value="P:DNA recombination"/>
    <property type="evidence" value="ECO:0007669"/>
    <property type="project" value="InterPro"/>
</dbReference>
<dbReference type="GO" id="GO:0006281">
    <property type="term" value="P:DNA repair"/>
    <property type="evidence" value="ECO:0007669"/>
    <property type="project" value="InterPro"/>
</dbReference>
<dbReference type="GO" id="GO:0006260">
    <property type="term" value="P:DNA replication"/>
    <property type="evidence" value="ECO:0000250"/>
    <property type="project" value="UniProtKB"/>
</dbReference>
<dbReference type="CDD" id="cd04474">
    <property type="entry name" value="RPA1_DBD_A"/>
    <property type="match status" value="1"/>
</dbReference>
<dbReference type="CDD" id="cd04475">
    <property type="entry name" value="RPA1_DBD_B"/>
    <property type="match status" value="1"/>
</dbReference>
<dbReference type="CDD" id="cd04476">
    <property type="entry name" value="RPA1_DBD_C"/>
    <property type="match status" value="1"/>
</dbReference>
<dbReference type="FunFam" id="2.40.50.140:FF:000041">
    <property type="entry name" value="Replication protein A subunit"/>
    <property type="match status" value="1"/>
</dbReference>
<dbReference type="FunFam" id="2.40.50.140:FF:000064">
    <property type="entry name" value="Replication protein A subunit"/>
    <property type="match status" value="1"/>
</dbReference>
<dbReference type="FunFam" id="2.40.50.140:FF:000344">
    <property type="entry name" value="Replication protein A subunit"/>
    <property type="match status" value="1"/>
</dbReference>
<dbReference type="Gene3D" id="2.40.50.140">
    <property type="entry name" value="Nucleic acid-binding proteins"/>
    <property type="match status" value="3"/>
</dbReference>
<dbReference type="InterPro" id="IPR047192">
    <property type="entry name" value="Euk_RPA1_DBD_C"/>
</dbReference>
<dbReference type="InterPro" id="IPR012340">
    <property type="entry name" value="NA-bd_OB-fold"/>
</dbReference>
<dbReference type="InterPro" id="IPR004365">
    <property type="entry name" value="NA-bd_OB_tRNA"/>
</dbReference>
<dbReference type="InterPro" id="IPR013955">
    <property type="entry name" value="Rep_factor-A_C"/>
</dbReference>
<dbReference type="InterPro" id="IPR031657">
    <property type="entry name" value="REPA_OB_2"/>
</dbReference>
<dbReference type="InterPro" id="IPR004591">
    <property type="entry name" value="Rfa1"/>
</dbReference>
<dbReference type="NCBIfam" id="TIGR00617">
    <property type="entry name" value="rpa1"/>
    <property type="match status" value="1"/>
</dbReference>
<dbReference type="PANTHER" id="PTHR47165">
    <property type="entry name" value="OS03G0429900 PROTEIN"/>
    <property type="match status" value="1"/>
</dbReference>
<dbReference type="PANTHER" id="PTHR47165:SF4">
    <property type="entry name" value="OS03G0429900 PROTEIN"/>
    <property type="match status" value="1"/>
</dbReference>
<dbReference type="Pfam" id="PF08646">
    <property type="entry name" value="Rep_fac-A_C"/>
    <property type="match status" value="1"/>
</dbReference>
<dbReference type="Pfam" id="PF16900">
    <property type="entry name" value="REPA_OB_2"/>
    <property type="match status" value="1"/>
</dbReference>
<dbReference type="Pfam" id="PF01336">
    <property type="entry name" value="tRNA_anti-codon"/>
    <property type="match status" value="1"/>
</dbReference>
<dbReference type="SUPFAM" id="SSF50249">
    <property type="entry name" value="Nucleic acid-binding proteins"/>
    <property type="match status" value="3"/>
</dbReference>
<organism>
    <name type="scientific">Crithidia fasciculata</name>
    <dbReference type="NCBI Taxonomy" id="5656"/>
    <lineage>
        <taxon>Eukaryota</taxon>
        <taxon>Discoba</taxon>
        <taxon>Euglenozoa</taxon>
        <taxon>Kinetoplastea</taxon>
        <taxon>Metakinetoplastina</taxon>
        <taxon>Trypanosomatida</taxon>
        <taxon>Trypanosomatidae</taxon>
        <taxon>Leishmaniinae</taxon>
        <taxon>Crithidia</taxon>
    </lineage>
</organism>
<evidence type="ECO:0000250" key="1">
    <source>
        <dbReference type="UniProtKB" id="P27694"/>
    </source>
</evidence>
<evidence type="ECO:0000255" key="2"/>
<evidence type="ECO:0000305" key="3"/>
<protein>
    <recommendedName>
        <fullName>Replication factor A 51 kDa subunit</fullName>
    </recommendedName>
    <alternativeName>
        <fullName>RP-A p51</fullName>
    </alternativeName>
    <alternativeName>
        <fullName>Replication factor-A protein 1</fullName>
        <shortName>RF-A protein 1</shortName>
    </alternativeName>
    <alternativeName>
        <fullName>Single-stranded DNA-binding protein P51 subunit</fullName>
    </alternativeName>
</protein>
<sequence>MHQPGSHQIQPIDSLTPFLGGKWWIRARVADKSDIRTWNKPTSQGKLFSFTLIDESAAIRATVFNDAVDTFEPLVVNGQVYYFSGGQVKNANRRFSNVNNDYELTFDRASEVILARQDSSAAALPMQRYNFVPIELLKQREVGSLVDVLGVVLKVDEISSITQKSTGRELIKRNVKIGDMSAAVEVTFWNDEAKAWNYPVGTVVALRQLKVGSFDGVTLSSTYQTKIDVNPADLPDVKKLATWYVSTGGANVVSLSSQGLGAGGGGGGEGNRGRKYLDEIQSEGIGRGAKPEYVDVRCVPIYFKQDAQWYDACPTCNKKVTEEGAQGDRFRCEKCDATVVPTQRYLVSIQVTDNVSQVWLTLFNEAGVEFFGMEASELKRRAQEDPLYIAKLAQARMNRPVVMRLRVKEETNANAMTGEESDRLRMSVVRISEFMPVAGTTEETRRRLAQNLRSECDDILRCIEAYV</sequence>
<gene>
    <name type="primary">RPA1</name>
</gene>
<accession>Q23696</accession>
<proteinExistence type="evidence at protein level"/>
<name>RFA1_CRIFA</name>